<sequence>MSTVNVQIGLHELLNGSNAQIQLSVPQLVEKVLMRNEGKLTSTGAVSASTGKYTGRSPKDKFIVKEASVADKIAWGAVNQPISEEHFNKLYTKVLEYLKEKEELFVFKGFAGADRNYRLPIQVINEYAWHNLFVHQLFIRPTEEELTTHESEFTIVSAPNFKADPAVDGTNSEAFIMVSFEKRIVLIGGTEYAGEMKKSIFSIMNFLLPEQDILSMHCSANVGEEGDVALFFGLSGTGKTTLSADPNRKLIGDDEHGWSDNGVFNIEGGCYAKCVNLSHEKEPQIFDAITFGSVLENVIINDQTRIADYNDTTLTENTRAAYPMHAIDNIVLPSVAGHPNTIIFLTADASGVLPPISKLSKEQAMYHFLSGYTSKLAGTERGVTSPQATFSTCFGSPFLPLDASRYAEMLGEKIEKHDAKVFLVNTGWTGGEYGVGKRMNLGYTRAMIQAALNGELAKTETAKHDIFGLEVPLHVPGVPDEVLMPEQTWADKAAYKAKAIELANEFKANFKKFDSVSEDIINLGGPIA</sequence>
<proteinExistence type="inferred from homology"/>
<feature type="chain" id="PRO_0000203805" description="Phosphoenolpyruvate carboxykinase (ATP)">
    <location>
        <begin position="1"/>
        <end position="528"/>
    </location>
</feature>
<feature type="binding site" evidence="1">
    <location>
        <position position="56"/>
    </location>
    <ligand>
        <name>substrate</name>
    </ligand>
</feature>
<feature type="binding site" evidence="1">
    <location>
        <position position="192"/>
    </location>
    <ligand>
        <name>substrate</name>
    </ligand>
</feature>
<feature type="binding site" evidence="1">
    <location>
        <position position="198"/>
    </location>
    <ligand>
        <name>ATP</name>
        <dbReference type="ChEBI" id="CHEBI:30616"/>
    </ligand>
</feature>
<feature type="binding site" evidence="1">
    <location>
        <position position="198"/>
    </location>
    <ligand>
        <name>Mn(2+)</name>
        <dbReference type="ChEBI" id="CHEBI:29035"/>
    </ligand>
</feature>
<feature type="binding site" evidence="1">
    <location>
        <position position="198"/>
    </location>
    <ligand>
        <name>substrate</name>
    </ligand>
</feature>
<feature type="binding site" evidence="1">
    <location>
        <position position="217"/>
    </location>
    <ligand>
        <name>ATP</name>
        <dbReference type="ChEBI" id="CHEBI:30616"/>
    </ligand>
</feature>
<feature type="binding site" evidence="1">
    <location>
        <position position="217"/>
    </location>
    <ligand>
        <name>Mn(2+)</name>
        <dbReference type="ChEBI" id="CHEBI:29035"/>
    </ligand>
</feature>
<feature type="binding site" evidence="1">
    <location>
        <begin position="233"/>
        <end position="241"/>
    </location>
    <ligand>
        <name>ATP</name>
        <dbReference type="ChEBI" id="CHEBI:30616"/>
    </ligand>
</feature>
<feature type="binding site" evidence="1">
    <location>
        <position position="254"/>
    </location>
    <ligand>
        <name>Mn(2+)</name>
        <dbReference type="ChEBI" id="CHEBI:29035"/>
    </ligand>
</feature>
<feature type="binding site" evidence="1">
    <location>
        <position position="282"/>
    </location>
    <ligand>
        <name>ATP</name>
        <dbReference type="ChEBI" id="CHEBI:30616"/>
    </ligand>
</feature>
<feature type="binding site" evidence="1">
    <location>
        <position position="319"/>
    </location>
    <ligand>
        <name>ATP</name>
        <dbReference type="ChEBI" id="CHEBI:30616"/>
    </ligand>
</feature>
<feature type="binding site" evidence="1">
    <location>
        <position position="319"/>
    </location>
    <ligand>
        <name>substrate</name>
    </ligand>
</feature>
<feature type="binding site" evidence="1">
    <location>
        <position position="444"/>
    </location>
    <ligand>
        <name>ATP</name>
        <dbReference type="ChEBI" id="CHEBI:30616"/>
    </ligand>
</feature>
<name>PCKA_BACCZ</name>
<protein>
    <recommendedName>
        <fullName evidence="1">Phosphoenolpyruvate carboxykinase (ATP)</fullName>
        <shortName evidence="1">PCK</shortName>
        <shortName evidence="1">PEP carboxykinase</shortName>
        <shortName evidence="1">PEPCK</shortName>
        <ecNumber evidence="1">4.1.1.49</ecNumber>
    </recommendedName>
</protein>
<gene>
    <name evidence="1" type="primary">pckA</name>
    <name type="ordered locus">BCE33L4518</name>
</gene>
<accession>Q632S4</accession>
<dbReference type="EC" id="4.1.1.49" evidence="1"/>
<dbReference type="EMBL" id="CP000001">
    <property type="protein sequence ID" value="AAU15755.1"/>
    <property type="molecule type" value="Genomic_DNA"/>
</dbReference>
<dbReference type="RefSeq" id="WP_000108802.1">
    <property type="nucleotide sequence ID" value="NZ_CP009968.1"/>
</dbReference>
<dbReference type="SMR" id="Q632S4"/>
<dbReference type="GeneID" id="72451423"/>
<dbReference type="KEGG" id="bcz:BCE33L4518"/>
<dbReference type="PATRIC" id="fig|288681.22.peg.847"/>
<dbReference type="UniPathway" id="UPA00138"/>
<dbReference type="Proteomes" id="UP000002612">
    <property type="component" value="Chromosome"/>
</dbReference>
<dbReference type="GO" id="GO:0005829">
    <property type="term" value="C:cytosol"/>
    <property type="evidence" value="ECO:0007669"/>
    <property type="project" value="TreeGrafter"/>
</dbReference>
<dbReference type="GO" id="GO:0005524">
    <property type="term" value="F:ATP binding"/>
    <property type="evidence" value="ECO:0007669"/>
    <property type="project" value="UniProtKB-UniRule"/>
</dbReference>
<dbReference type="GO" id="GO:0046872">
    <property type="term" value="F:metal ion binding"/>
    <property type="evidence" value="ECO:0007669"/>
    <property type="project" value="UniProtKB-KW"/>
</dbReference>
<dbReference type="GO" id="GO:0004612">
    <property type="term" value="F:phosphoenolpyruvate carboxykinase (ATP) activity"/>
    <property type="evidence" value="ECO:0007669"/>
    <property type="project" value="UniProtKB-UniRule"/>
</dbReference>
<dbReference type="GO" id="GO:0006094">
    <property type="term" value="P:gluconeogenesis"/>
    <property type="evidence" value="ECO:0007669"/>
    <property type="project" value="UniProtKB-UniRule"/>
</dbReference>
<dbReference type="CDD" id="cd00484">
    <property type="entry name" value="PEPCK_ATP"/>
    <property type="match status" value="1"/>
</dbReference>
<dbReference type="FunFam" id="2.170.8.10:FF:000001">
    <property type="entry name" value="Phosphoenolpyruvate carboxykinase (ATP)"/>
    <property type="match status" value="1"/>
</dbReference>
<dbReference type="FunFam" id="3.40.449.10:FF:000001">
    <property type="entry name" value="Phosphoenolpyruvate carboxykinase (ATP)"/>
    <property type="match status" value="1"/>
</dbReference>
<dbReference type="Gene3D" id="3.90.228.20">
    <property type="match status" value="1"/>
</dbReference>
<dbReference type="Gene3D" id="3.40.449.10">
    <property type="entry name" value="Phosphoenolpyruvate Carboxykinase, domain 1"/>
    <property type="match status" value="1"/>
</dbReference>
<dbReference type="Gene3D" id="2.170.8.10">
    <property type="entry name" value="Phosphoenolpyruvate Carboxykinase, domain 2"/>
    <property type="match status" value="1"/>
</dbReference>
<dbReference type="HAMAP" id="MF_00453">
    <property type="entry name" value="PEPCK_ATP"/>
    <property type="match status" value="1"/>
</dbReference>
<dbReference type="InterPro" id="IPR001272">
    <property type="entry name" value="PEP_carboxykinase_ATP"/>
</dbReference>
<dbReference type="InterPro" id="IPR013035">
    <property type="entry name" value="PEP_carboxykinase_C"/>
</dbReference>
<dbReference type="InterPro" id="IPR008210">
    <property type="entry name" value="PEP_carboxykinase_N"/>
</dbReference>
<dbReference type="InterPro" id="IPR015994">
    <property type="entry name" value="PEPCK_ATP_CS"/>
</dbReference>
<dbReference type="NCBIfam" id="TIGR00224">
    <property type="entry name" value="pckA"/>
    <property type="match status" value="1"/>
</dbReference>
<dbReference type="NCBIfam" id="NF006820">
    <property type="entry name" value="PRK09344.1-2"/>
    <property type="match status" value="1"/>
</dbReference>
<dbReference type="NCBIfam" id="NF006821">
    <property type="entry name" value="PRK09344.1-3"/>
    <property type="match status" value="1"/>
</dbReference>
<dbReference type="PANTHER" id="PTHR30031:SF0">
    <property type="entry name" value="PHOSPHOENOLPYRUVATE CARBOXYKINASE (ATP)"/>
    <property type="match status" value="1"/>
</dbReference>
<dbReference type="PANTHER" id="PTHR30031">
    <property type="entry name" value="PHOSPHOENOLPYRUVATE CARBOXYKINASE ATP"/>
    <property type="match status" value="1"/>
</dbReference>
<dbReference type="Pfam" id="PF01293">
    <property type="entry name" value="PEPCK_ATP"/>
    <property type="match status" value="1"/>
</dbReference>
<dbReference type="PIRSF" id="PIRSF006294">
    <property type="entry name" value="PEP_crbxkin"/>
    <property type="match status" value="1"/>
</dbReference>
<dbReference type="SUPFAM" id="SSF68923">
    <property type="entry name" value="PEP carboxykinase N-terminal domain"/>
    <property type="match status" value="1"/>
</dbReference>
<dbReference type="SUPFAM" id="SSF53795">
    <property type="entry name" value="PEP carboxykinase-like"/>
    <property type="match status" value="1"/>
</dbReference>
<dbReference type="PROSITE" id="PS00532">
    <property type="entry name" value="PEPCK_ATP"/>
    <property type="match status" value="1"/>
</dbReference>
<reference key="1">
    <citation type="journal article" date="2006" name="J. Bacteriol.">
        <title>Pathogenomic sequence analysis of Bacillus cereus and Bacillus thuringiensis isolates closely related to Bacillus anthracis.</title>
        <authorList>
            <person name="Han C.S."/>
            <person name="Xie G."/>
            <person name="Challacombe J.F."/>
            <person name="Altherr M.R."/>
            <person name="Bhotika S.S."/>
            <person name="Bruce D."/>
            <person name="Campbell C.S."/>
            <person name="Campbell M.L."/>
            <person name="Chen J."/>
            <person name="Chertkov O."/>
            <person name="Cleland C."/>
            <person name="Dimitrijevic M."/>
            <person name="Doggett N.A."/>
            <person name="Fawcett J.J."/>
            <person name="Glavina T."/>
            <person name="Goodwin L.A."/>
            <person name="Hill K.K."/>
            <person name="Hitchcock P."/>
            <person name="Jackson P.J."/>
            <person name="Keim P."/>
            <person name="Kewalramani A.R."/>
            <person name="Longmire J."/>
            <person name="Lucas S."/>
            <person name="Malfatti S."/>
            <person name="McMurry K."/>
            <person name="Meincke L.J."/>
            <person name="Misra M."/>
            <person name="Moseman B.L."/>
            <person name="Mundt M."/>
            <person name="Munk A.C."/>
            <person name="Okinaka R.T."/>
            <person name="Parson-Quintana B."/>
            <person name="Reilly L.P."/>
            <person name="Richardson P."/>
            <person name="Robinson D.L."/>
            <person name="Rubin E."/>
            <person name="Saunders E."/>
            <person name="Tapia R."/>
            <person name="Tesmer J.G."/>
            <person name="Thayer N."/>
            <person name="Thompson L.S."/>
            <person name="Tice H."/>
            <person name="Ticknor L.O."/>
            <person name="Wills P.L."/>
            <person name="Brettin T.S."/>
            <person name="Gilna P."/>
        </authorList>
    </citation>
    <scope>NUCLEOTIDE SEQUENCE [LARGE SCALE GENOMIC DNA]</scope>
    <source>
        <strain>ZK / E33L</strain>
    </source>
</reference>
<comment type="function">
    <text evidence="1">Involved in the gluconeogenesis. Catalyzes the conversion of oxaloacetate (OAA) to phosphoenolpyruvate (PEP) through direct phosphoryl transfer between the nucleoside triphosphate and OAA.</text>
</comment>
<comment type="catalytic activity">
    <reaction evidence="1">
        <text>oxaloacetate + ATP = phosphoenolpyruvate + ADP + CO2</text>
        <dbReference type="Rhea" id="RHEA:18617"/>
        <dbReference type="ChEBI" id="CHEBI:16452"/>
        <dbReference type="ChEBI" id="CHEBI:16526"/>
        <dbReference type="ChEBI" id="CHEBI:30616"/>
        <dbReference type="ChEBI" id="CHEBI:58702"/>
        <dbReference type="ChEBI" id="CHEBI:456216"/>
        <dbReference type="EC" id="4.1.1.49"/>
    </reaction>
</comment>
<comment type="cofactor">
    <cofactor evidence="1">
        <name>Mn(2+)</name>
        <dbReference type="ChEBI" id="CHEBI:29035"/>
    </cofactor>
    <text evidence="1">Binds 1 Mn(2+) ion per subunit.</text>
</comment>
<comment type="pathway">
    <text evidence="1">Carbohydrate biosynthesis; gluconeogenesis.</text>
</comment>
<comment type="subcellular location">
    <subcellularLocation>
        <location evidence="1">Cytoplasm</location>
    </subcellularLocation>
</comment>
<comment type="similarity">
    <text evidence="1">Belongs to the phosphoenolpyruvate carboxykinase (ATP) family.</text>
</comment>
<keyword id="KW-0067">ATP-binding</keyword>
<keyword id="KW-0963">Cytoplasm</keyword>
<keyword id="KW-0210">Decarboxylase</keyword>
<keyword id="KW-0312">Gluconeogenesis</keyword>
<keyword id="KW-0456">Lyase</keyword>
<keyword id="KW-0464">Manganese</keyword>
<keyword id="KW-0479">Metal-binding</keyword>
<keyword id="KW-0547">Nucleotide-binding</keyword>
<organism>
    <name type="scientific">Bacillus cereus (strain ZK / E33L)</name>
    <dbReference type="NCBI Taxonomy" id="288681"/>
    <lineage>
        <taxon>Bacteria</taxon>
        <taxon>Bacillati</taxon>
        <taxon>Bacillota</taxon>
        <taxon>Bacilli</taxon>
        <taxon>Bacillales</taxon>
        <taxon>Bacillaceae</taxon>
        <taxon>Bacillus</taxon>
        <taxon>Bacillus cereus group</taxon>
    </lineage>
</organism>
<evidence type="ECO:0000255" key="1">
    <source>
        <dbReference type="HAMAP-Rule" id="MF_00453"/>
    </source>
</evidence>